<dbReference type="EMBL" id="AP006840">
    <property type="protein sequence ID" value="BAD39063.1"/>
    <property type="molecule type" value="Genomic_DNA"/>
</dbReference>
<dbReference type="RefSeq" id="WP_011194213.1">
    <property type="nucleotide sequence ID" value="NC_006177.1"/>
</dbReference>
<dbReference type="SMR" id="Q67TD0"/>
<dbReference type="STRING" id="292459.STH78"/>
<dbReference type="KEGG" id="sth:STH78"/>
<dbReference type="eggNOG" id="COG4475">
    <property type="taxonomic scope" value="Bacteria"/>
</dbReference>
<dbReference type="HOGENOM" id="CLU_106658_0_0_9"/>
<dbReference type="OrthoDB" id="9803187at2"/>
<dbReference type="Proteomes" id="UP000000417">
    <property type="component" value="Chromosome"/>
</dbReference>
<dbReference type="Gene3D" id="3.40.50.10360">
    <property type="entry name" value="Hypothetical protein TT1679"/>
    <property type="match status" value="1"/>
</dbReference>
<dbReference type="HAMAP" id="MF_00800">
    <property type="entry name" value="UPF0340"/>
    <property type="match status" value="1"/>
</dbReference>
<dbReference type="InterPro" id="IPR028345">
    <property type="entry name" value="Antibiotic_NAT-like"/>
</dbReference>
<dbReference type="InterPro" id="IPR006340">
    <property type="entry name" value="DUF436"/>
</dbReference>
<dbReference type="NCBIfam" id="TIGR01440">
    <property type="entry name" value="TIGR01440 family protein"/>
    <property type="match status" value="1"/>
</dbReference>
<dbReference type="Pfam" id="PF04260">
    <property type="entry name" value="DUF436"/>
    <property type="match status" value="1"/>
</dbReference>
<dbReference type="PIRSF" id="PIRSF007510">
    <property type="entry name" value="UCP007510"/>
    <property type="match status" value="1"/>
</dbReference>
<dbReference type="SUPFAM" id="SSF110710">
    <property type="entry name" value="TTHA0583/YokD-like"/>
    <property type="match status" value="1"/>
</dbReference>
<organism>
    <name type="scientific">Symbiobacterium thermophilum (strain DSM 24528 / JCM 14929 / IAM 14863 / T)</name>
    <dbReference type="NCBI Taxonomy" id="292459"/>
    <lineage>
        <taxon>Bacteria</taxon>
        <taxon>Bacillati</taxon>
        <taxon>Bacillota</taxon>
        <taxon>Clostridia</taxon>
        <taxon>Eubacteriales</taxon>
        <taxon>Symbiobacteriaceae</taxon>
        <taxon>Symbiobacterium</taxon>
    </lineage>
</organism>
<sequence>MRAEARAAVGELLEAAGLSPGQVLVVGCSTSEVIGRRIGTAGSEAVAGAILEPLLEATQAAGVHLAVQCCEHLNRALVVERAAAERYDWERVTVVPVPRAGGALAARAMRRLPDAVVVEEIKADAGLDIGLTLIGMHLRRVAVPVRLKTAAIGHARVVAARTRPKLIGGARAVYEMQ</sequence>
<comment type="similarity">
    <text evidence="1">Belongs to the UPF0340 family.</text>
</comment>
<keyword id="KW-1185">Reference proteome</keyword>
<reference key="1">
    <citation type="journal article" date="2004" name="Nucleic Acids Res.">
        <title>Genome sequence of Symbiobacterium thermophilum, an uncultivable bacterium that depends on microbial commensalism.</title>
        <authorList>
            <person name="Ueda K."/>
            <person name="Yamashita A."/>
            <person name="Ishikawa J."/>
            <person name="Shimada M."/>
            <person name="Watsuji T."/>
            <person name="Morimura K."/>
            <person name="Ikeda H."/>
            <person name="Hattori M."/>
            <person name="Beppu T."/>
        </authorList>
    </citation>
    <scope>NUCLEOTIDE SEQUENCE [LARGE SCALE GENOMIC DNA]</scope>
    <source>
        <strain>DSM 24528 / JCM 14929 / IAM 14863 / T</strain>
    </source>
</reference>
<evidence type="ECO:0000255" key="1">
    <source>
        <dbReference type="HAMAP-Rule" id="MF_00800"/>
    </source>
</evidence>
<gene>
    <name type="ordered locus">STH78</name>
</gene>
<protein>
    <recommendedName>
        <fullName evidence="1">UPF0340 protein STH78</fullName>
    </recommendedName>
</protein>
<accession>Q67TD0</accession>
<feature type="chain" id="PRO_0000213029" description="UPF0340 protein STH78">
    <location>
        <begin position="1"/>
        <end position="177"/>
    </location>
</feature>
<name>Y078_SYMTH</name>
<proteinExistence type="inferred from homology"/>